<sequence length="1249" mass="144442">MEEVITIAQIVHRGTDILSLNNEEIEALVDEIYSTLKGSNDIKNIRLIDFLFTLKDFVNHVRAEQSKLPDLSMPMEAYIRQLLVDSDVVPIVSEKKKELRVRPSTRKEIFLINGTHLAVPAEAPIEIYGLKLRLKTFSPQCFMRMAEIGSFSPETLGYVASGANLTNFIRVFMKCVDQETWKKNGEGVVVTTKENIIQFTHQYIELYKFLRSGGHSWLINRLAEEMVHRKLDREDQGSHISNIVETEEIEPEENIKRVIFFLKELSTMYSVSPVFTSGYMPLLYDLYRAGYLEVLWNPVEQKFLQHAEQREKEQMILQQVDMKLMEVTTQARQYFKIMEEKIGRVQSDAIREILTMEGKVDDPNSILQEVIKACGKQEAELITTEYLNIKKQWELQEKNACAHLKLVKQLRSGLQYAESLKVLESIRVLYKEKNNTTNWNLCKACGFKLLCPHVDMLIQLQAAEASYDTMRTKLMKFSGINKEKENNQGLIYSYFCKICGEELAHFIQEDRTADVGVIGDLNSKLRIFIWQETMKACTFIHFGKLVDVKQFANIAVNVCLPLVYSIENIKKEEDYDPLTQLYAVIYIYAYILNLIYSSQKNKEFLTITIHGMKADSSLNAYVTFLLEKMMQQYSGIINQLSEITDQWIANNFREAFKKIIHQNGLQGLSVQDDTKVLLTEILLDPLYDYAATVARIDGSIPMYKPRTPKEAEYEFKTVIGRTPAELLSQKEFYDKIYTSKYRPDFTQLARLKDIYFQEESLRVWWGGRDEEKTSTLIYLRAYELFLKYLQNAPNFNSELAEFKTYENAYGEQKALLAQQGFYNIFDPNTGRADQRTRLFEYKRLPISTLYDERGLPHKWTIYVYKAVDSSQKPAEIEVTRKDVIKKIDDHYALADLRCSVCHVLQHEVGQLNIKKVQTALKASLEFNTFYAFYESRCPKGGLHDFQDKKCVKCGLFTYIIYDHLSQPELVHDYYNNYKDQYDKEKMSIRSIQIKKDMTTPSTETQPKPPQEPWTFDYGKIIKTAKILDISPAVIEAIGAMEGRSYADIREGQGAPPPPTSMDDPRLMAVDSAVRIFLYNYNCLRHVSTFNKPPMHVERLVKHLSYEEKEDLEKVLPNVVNEYHTTFKHLRVTDPASALLYSIEFLCISFLTLYEIKEPSWVVNIVREFALTELNTIIQSEKLLSKPGAFNFMIFGEDFVCSGEDSSMDDISAYSSPGLFGEDIIDRLDDPFSIEDVDISLDVLDNLAPQ</sequence>
<organism>
    <name type="scientific">African swine fever virus (isolate Tick/South Africa/Pretoriuskop Pr4/1996)</name>
    <name type="common">ASFV</name>
    <dbReference type="NCBI Taxonomy" id="561443"/>
    <lineage>
        <taxon>Viruses</taxon>
        <taxon>Varidnaviria</taxon>
        <taxon>Bamfordvirae</taxon>
        <taxon>Nucleocytoviricota</taxon>
        <taxon>Pokkesviricetes</taxon>
        <taxon>Asfuvirales</taxon>
        <taxon>Asfarviridae</taxon>
        <taxon>Asfivirus</taxon>
        <taxon>African swine fever virus</taxon>
    </lineage>
</organism>
<accession>P0CAB5</accession>
<proteinExistence type="inferred from homology"/>
<feature type="chain" id="PRO_0000373612" description="Minor capsid protein M1249L">
    <location>
        <begin position="1"/>
        <end position="1249"/>
    </location>
</feature>
<keyword id="KW-1035">Host cytoplasm</keyword>
<keyword id="KW-0945">Host-virus interaction</keyword>
<keyword id="KW-1090">Inhibition of host innate immune response by virus</keyword>
<keyword id="KW-1092">Inhibition of host IRF3 by virus</keyword>
<keyword id="KW-1113">Inhibition of host RLR pathway by virus</keyword>
<keyword id="KW-0426">Late protein</keyword>
<keyword id="KW-0899">Viral immunoevasion</keyword>
<keyword id="KW-0946">Virion</keyword>
<organismHost>
    <name type="scientific">Ornithodoros</name>
    <name type="common">relapsing fever ticks</name>
    <dbReference type="NCBI Taxonomy" id="6937"/>
</organismHost>
<organismHost>
    <name type="scientific">Phacochoerus aethiopicus</name>
    <name type="common">Warthog</name>
    <dbReference type="NCBI Taxonomy" id="85517"/>
</organismHost>
<organismHost>
    <name type="scientific">Phacochoerus africanus</name>
    <name type="common">Warthog</name>
    <dbReference type="NCBI Taxonomy" id="41426"/>
</organismHost>
<organismHost>
    <name type="scientific">Potamochoerus larvatus</name>
    <name type="common">Bushpig</name>
    <dbReference type="NCBI Taxonomy" id="273792"/>
</organismHost>
<organismHost>
    <name type="scientific">Sus scrofa</name>
    <name type="common">Pig</name>
    <dbReference type="NCBI Taxonomy" id="9823"/>
</organismHost>
<reference key="1">
    <citation type="submission" date="2003-03" db="EMBL/GenBank/DDBJ databases">
        <title>African swine fever virus genomes.</title>
        <authorList>
            <person name="Kutish G.F."/>
            <person name="Rock D.L."/>
        </authorList>
    </citation>
    <scope>NUCLEOTIDE SEQUENCE [LARGE SCALE GENOMIC DNA]</scope>
</reference>
<protein>
    <recommendedName>
        <fullName evidence="1">Minor capsid protein M1249L</fullName>
        <shortName>pM1249L</shortName>
    </recommendedName>
</protein>
<comment type="function">
    <text evidence="1">Together with the penton and the other minor capsid proteins (p17, p49), forms a complicated network immediately below the outer capsid shell, stabilizing the whole capsid. In addition, blocks IFN-beta transactivation mediated by the cGAS-STING pathway and regulates the transcriptional activity of IFN-beta. Mechanistically, suppresses the phosphorylation of host key adapter protein TBK1 and degrades host IRF3 in the cytoplasm.</text>
</comment>
<comment type="subunit">
    <text evidence="1">Interacts with the minor capsid protein p17 and with the hexon capsid protein p72 capsomers; these interactions form a rigid zipper structure that stabilizes the capsomers. Interacts with host IRF3.</text>
</comment>
<comment type="subcellular location">
    <subcellularLocation>
        <location evidence="1">Virion</location>
    </subcellularLocation>
    <subcellularLocation>
        <location evidence="1">Host cytoplasm</location>
    </subcellularLocation>
</comment>
<comment type="induction">
    <text evidence="2">Expressed in the late phase of the viral replicative cycle.</text>
</comment>
<comment type="similarity">
    <text evidence="2">Belongs to the asfivirus M1249L family.</text>
</comment>
<dbReference type="EMBL" id="AY261363">
    <property type="status" value="NOT_ANNOTATED_CDS"/>
    <property type="molecule type" value="Genomic_DNA"/>
</dbReference>
<dbReference type="SMR" id="P0CAB5"/>
<dbReference type="Proteomes" id="UP000000859">
    <property type="component" value="Segment"/>
</dbReference>
<dbReference type="GO" id="GO:0030430">
    <property type="term" value="C:host cell cytoplasm"/>
    <property type="evidence" value="ECO:0007669"/>
    <property type="project" value="UniProtKB-SubCell"/>
</dbReference>
<dbReference type="GO" id="GO:0044423">
    <property type="term" value="C:virion component"/>
    <property type="evidence" value="ECO:0007669"/>
    <property type="project" value="UniProtKB-KW"/>
</dbReference>
<dbReference type="GO" id="GO:0039548">
    <property type="term" value="P:symbiont-mediated suppression of host cytoplasmic pattern recognition receptor signaling pathway via inhibition of IRF3 activity"/>
    <property type="evidence" value="ECO:0007669"/>
    <property type="project" value="UniProtKB-KW"/>
</dbReference>
<evidence type="ECO:0000250" key="1">
    <source>
        <dbReference type="UniProtKB" id="Q65152"/>
    </source>
</evidence>
<evidence type="ECO:0000305" key="2"/>
<gene>
    <name type="ordered locus">Pret-072</name>
</gene>
<name>M1249_ASFP4</name>